<accession>Q9K8V7</accession>
<dbReference type="EC" id="6.3.4.16" evidence="1"/>
<dbReference type="EC" id="6.3.5.5" evidence="1"/>
<dbReference type="EMBL" id="BA000004">
    <property type="protein sequence ID" value="BAB06614.1"/>
    <property type="molecule type" value="Genomic_DNA"/>
</dbReference>
<dbReference type="PIR" id="G84011">
    <property type="entry name" value="G84011"/>
</dbReference>
<dbReference type="RefSeq" id="WP_010899042.1">
    <property type="nucleotide sequence ID" value="NC_002570.2"/>
</dbReference>
<dbReference type="SMR" id="Q9K8V7"/>
<dbReference type="STRING" id="272558.gene:10728805"/>
<dbReference type="KEGG" id="bha:BH2895"/>
<dbReference type="eggNOG" id="COG0458">
    <property type="taxonomic scope" value="Bacteria"/>
</dbReference>
<dbReference type="HOGENOM" id="CLU_000513_1_0_9"/>
<dbReference type="OrthoDB" id="9804197at2"/>
<dbReference type="UniPathway" id="UPA00068">
    <property type="reaction ID" value="UER00171"/>
</dbReference>
<dbReference type="Proteomes" id="UP000001258">
    <property type="component" value="Chromosome"/>
</dbReference>
<dbReference type="GO" id="GO:0005737">
    <property type="term" value="C:cytoplasm"/>
    <property type="evidence" value="ECO:0007669"/>
    <property type="project" value="TreeGrafter"/>
</dbReference>
<dbReference type="GO" id="GO:0005524">
    <property type="term" value="F:ATP binding"/>
    <property type="evidence" value="ECO:0007669"/>
    <property type="project" value="UniProtKB-UniRule"/>
</dbReference>
<dbReference type="GO" id="GO:0004087">
    <property type="term" value="F:carbamoyl-phosphate synthase (ammonia) activity"/>
    <property type="evidence" value="ECO:0007669"/>
    <property type="project" value="RHEA"/>
</dbReference>
<dbReference type="GO" id="GO:0004088">
    <property type="term" value="F:carbamoyl-phosphate synthase (glutamine-hydrolyzing) activity"/>
    <property type="evidence" value="ECO:0007669"/>
    <property type="project" value="UniProtKB-UniRule"/>
</dbReference>
<dbReference type="GO" id="GO:0046872">
    <property type="term" value="F:metal ion binding"/>
    <property type="evidence" value="ECO:0007669"/>
    <property type="project" value="UniProtKB-KW"/>
</dbReference>
<dbReference type="GO" id="GO:0044205">
    <property type="term" value="P:'de novo' UMP biosynthetic process"/>
    <property type="evidence" value="ECO:0007669"/>
    <property type="project" value="UniProtKB-UniRule"/>
</dbReference>
<dbReference type="GO" id="GO:0006541">
    <property type="term" value="P:glutamine metabolic process"/>
    <property type="evidence" value="ECO:0007669"/>
    <property type="project" value="TreeGrafter"/>
</dbReference>
<dbReference type="GO" id="GO:0006526">
    <property type="term" value="P:L-arginine biosynthetic process"/>
    <property type="evidence" value="ECO:0007669"/>
    <property type="project" value="UniProtKB-UniRule"/>
</dbReference>
<dbReference type="FunFam" id="1.10.1030.10:FF:000002">
    <property type="entry name" value="Carbamoyl-phosphate synthase large chain"/>
    <property type="match status" value="1"/>
</dbReference>
<dbReference type="FunFam" id="3.30.470.20:FF:000001">
    <property type="entry name" value="Carbamoyl-phosphate synthase large chain"/>
    <property type="match status" value="1"/>
</dbReference>
<dbReference type="FunFam" id="3.30.470.20:FF:000026">
    <property type="entry name" value="Carbamoyl-phosphate synthase large chain"/>
    <property type="match status" value="1"/>
</dbReference>
<dbReference type="FunFam" id="3.40.50.20:FF:000001">
    <property type="entry name" value="Carbamoyl-phosphate synthase large chain"/>
    <property type="match status" value="2"/>
</dbReference>
<dbReference type="Gene3D" id="3.40.50.20">
    <property type="match status" value="2"/>
</dbReference>
<dbReference type="Gene3D" id="3.30.1490.20">
    <property type="entry name" value="ATP-grasp fold, A domain"/>
    <property type="match status" value="1"/>
</dbReference>
<dbReference type="Gene3D" id="3.30.470.20">
    <property type="entry name" value="ATP-grasp fold, B domain"/>
    <property type="match status" value="2"/>
</dbReference>
<dbReference type="Gene3D" id="1.10.1030.10">
    <property type="entry name" value="Carbamoyl-phosphate synthetase, large subunit oligomerisation domain"/>
    <property type="match status" value="1"/>
</dbReference>
<dbReference type="HAMAP" id="MF_01210_B">
    <property type="entry name" value="CPSase_L_chain_B"/>
    <property type="match status" value="1"/>
</dbReference>
<dbReference type="InterPro" id="IPR011761">
    <property type="entry name" value="ATP-grasp"/>
</dbReference>
<dbReference type="InterPro" id="IPR013815">
    <property type="entry name" value="ATP_grasp_subdomain_1"/>
</dbReference>
<dbReference type="InterPro" id="IPR006275">
    <property type="entry name" value="CarbamoylP_synth_lsu"/>
</dbReference>
<dbReference type="InterPro" id="IPR005480">
    <property type="entry name" value="CarbamoylP_synth_lsu_oligo"/>
</dbReference>
<dbReference type="InterPro" id="IPR036897">
    <property type="entry name" value="CarbamoylP_synth_lsu_oligo_sf"/>
</dbReference>
<dbReference type="InterPro" id="IPR005479">
    <property type="entry name" value="CbamoylP_synth_lsu-like_ATP-bd"/>
</dbReference>
<dbReference type="InterPro" id="IPR005483">
    <property type="entry name" value="CbamoylP_synth_lsu_CPSase_dom"/>
</dbReference>
<dbReference type="InterPro" id="IPR011607">
    <property type="entry name" value="MGS-like_dom"/>
</dbReference>
<dbReference type="InterPro" id="IPR016185">
    <property type="entry name" value="PreATP-grasp_dom_sf"/>
</dbReference>
<dbReference type="NCBIfam" id="TIGR01369">
    <property type="entry name" value="CPSaseII_lrg"/>
    <property type="match status" value="1"/>
</dbReference>
<dbReference type="NCBIfam" id="NF003671">
    <property type="entry name" value="PRK05294.1"/>
    <property type="match status" value="1"/>
</dbReference>
<dbReference type="NCBIfam" id="NF009455">
    <property type="entry name" value="PRK12815.1"/>
    <property type="match status" value="1"/>
</dbReference>
<dbReference type="PANTHER" id="PTHR11405:SF53">
    <property type="entry name" value="CARBAMOYL-PHOSPHATE SYNTHASE [AMMONIA], MITOCHONDRIAL"/>
    <property type="match status" value="1"/>
</dbReference>
<dbReference type="PANTHER" id="PTHR11405">
    <property type="entry name" value="CARBAMOYLTRANSFERASE FAMILY MEMBER"/>
    <property type="match status" value="1"/>
</dbReference>
<dbReference type="Pfam" id="PF02786">
    <property type="entry name" value="CPSase_L_D2"/>
    <property type="match status" value="2"/>
</dbReference>
<dbReference type="Pfam" id="PF02787">
    <property type="entry name" value="CPSase_L_D3"/>
    <property type="match status" value="1"/>
</dbReference>
<dbReference type="PRINTS" id="PR00098">
    <property type="entry name" value="CPSASE"/>
</dbReference>
<dbReference type="SMART" id="SM01096">
    <property type="entry name" value="CPSase_L_D3"/>
    <property type="match status" value="1"/>
</dbReference>
<dbReference type="SUPFAM" id="SSF48108">
    <property type="entry name" value="Carbamoyl phosphate synthetase, large subunit connection domain"/>
    <property type="match status" value="1"/>
</dbReference>
<dbReference type="SUPFAM" id="SSF56059">
    <property type="entry name" value="Glutathione synthetase ATP-binding domain-like"/>
    <property type="match status" value="2"/>
</dbReference>
<dbReference type="SUPFAM" id="SSF52440">
    <property type="entry name" value="PreATP-grasp domain"/>
    <property type="match status" value="2"/>
</dbReference>
<dbReference type="PROSITE" id="PS50975">
    <property type="entry name" value="ATP_GRASP"/>
    <property type="match status" value="2"/>
</dbReference>
<dbReference type="PROSITE" id="PS00866">
    <property type="entry name" value="CPSASE_1"/>
    <property type="match status" value="2"/>
</dbReference>
<dbReference type="PROSITE" id="PS00867">
    <property type="entry name" value="CPSASE_2"/>
    <property type="match status" value="2"/>
</dbReference>
<dbReference type="PROSITE" id="PS51855">
    <property type="entry name" value="MGS"/>
    <property type="match status" value="1"/>
</dbReference>
<organism>
    <name type="scientific">Halalkalibacterium halodurans (strain ATCC BAA-125 / DSM 18197 / FERM 7344 / JCM 9153 / C-125)</name>
    <name type="common">Bacillus halodurans</name>
    <dbReference type="NCBI Taxonomy" id="272558"/>
    <lineage>
        <taxon>Bacteria</taxon>
        <taxon>Bacillati</taxon>
        <taxon>Bacillota</taxon>
        <taxon>Bacilli</taxon>
        <taxon>Bacillales</taxon>
        <taxon>Bacillaceae</taxon>
        <taxon>Halalkalibacterium (ex Joshi et al. 2022)</taxon>
    </lineage>
</organism>
<comment type="function">
    <text evidence="2">Large subunit of the glutamine-dependent carbamoyl phosphate synthetase (CPSase). CPSase catalyzes the formation of carbamoyl phosphate from the ammonia moiety of glutamine, carbonate, and phosphate donated by ATP, constituting the first step of the biosynthetic pathway leading to arginine and/or urea. The large subunit (synthetase) binds the substrates ammonia (free or transferred from glutamine from the small subunit), hydrogencarbonate and ATP and carries out an ATP-coupled ligase reaction, activating hydrogencarbonate by forming carboxy phosphate which reacts with ammonia to form carbamoyl phosphate.</text>
</comment>
<comment type="catalytic activity">
    <reaction evidence="1">
        <text>hydrogencarbonate + L-glutamine + 2 ATP + H2O = carbamoyl phosphate + L-glutamate + 2 ADP + phosphate + 2 H(+)</text>
        <dbReference type="Rhea" id="RHEA:18633"/>
        <dbReference type="ChEBI" id="CHEBI:15377"/>
        <dbReference type="ChEBI" id="CHEBI:15378"/>
        <dbReference type="ChEBI" id="CHEBI:17544"/>
        <dbReference type="ChEBI" id="CHEBI:29985"/>
        <dbReference type="ChEBI" id="CHEBI:30616"/>
        <dbReference type="ChEBI" id="CHEBI:43474"/>
        <dbReference type="ChEBI" id="CHEBI:58228"/>
        <dbReference type="ChEBI" id="CHEBI:58359"/>
        <dbReference type="ChEBI" id="CHEBI:456216"/>
        <dbReference type="EC" id="6.3.5.5"/>
    </reaction>
</comment>
<comment type="catalytic activity">
    <molecule>Carbamoyl phosphate synthase arginine-specific large chain</molecule>
    <reaction evidence="1">
        <text>hydrogencarbonate + NH4(+) + 2 ATP = carbamoyl phosphate + 2 ADP + phosphate + 2 H(+)</text>
        <dbReference type="Rhea" id="RHEA:18029"/>
        <dbReference type="ChEBI" id="CHEBI:15378"/>
        <dbReference type="ChEBI" id="CHEBI:17544"/>
        <dbReference type="ChEBI" id="CHEBI:28938"/>
        <dbReference type="ChEBI" id="CHEBI:30616"/>
        <dbReference type="ChEBI" id="CHEBI:43474"/>
        <dbReference type="ChEBI" id="CHEBI:58228"/>
        <dbReference type="ChEBI" id="CHEBI:456216"/>
        <dbReference type="EC" id="6.3.4.16"/>
    </reaction>
</comment>
<comment type="cofactor">
    <cofactor evidence="1">
        <name>Mg(2+)</name>
        <dbReference type="ChEBI" id="CHEBI:18420"/>
    </cofactor>
    <cofactor evidence="1">
        <name>Mn(2+)</name>
        <dbReference type="ChEBI" id="CHEBI:29035"/>
    </cofactor>
    <text evidence="1">Binds 4 Mg(2+) or Mn(2+) ions per subunit.</text>
</comment>
<comment type="pathway">
    <text evidence="1">Amino-acid biosynthesis; L-arginine biosynthesis; carbamoyl phosphate from bicarbonate: step 1/1.</text>
</comment>
<comment type="subunit">
    <text evidence="1">Composed of two chains; the small (or glutamine) chain promotes the hydrolysis of glutamine to ammonia, which is used by the large (or ammonia) chain to synthesize carbamoyl phosphate. Tetramer of heterodimers (alpha,beta)4.</text>
</comment>
<comment type="domain">
    <text evidence="1">The large subunit is composed of 2 ATP-grasp domains that are involved in binding the 2 ATP molecules needed for carbamoyl phosphate synthesis. The N-terminal ATP-grasp domain (referred to as the carboxyphosphate synthetic component) catalyzes the ATP-dependent phosphorylation of hydrogencarbonate to carboxyphosphate and the subsequent nucleophilic attack by ammonia to form a carbamate intermediate. The C-terminal ATP-grasp domain (referred to as the carbamoyl phosphate synthetic component) then catalyzes the phosphorylation of carbamate with the second ATP to form the end product carbamoyl phosphate. The reactive and unstable enzyme intermediates are sequentially channeled from one active site to the next through the interior of the protein over a distance of at least 96 A.</text>
</comment>
<comment type="similarity">
    <text evidence="1">Belongs to the CarB family.</text>
</comment>
<evidence type="ECO:0000255" key="1">
    <source>
        <dbReference type="HAMAP-Rule" id="MF_01210"/>
    </source>
</evidence>
<evidence type="ECO:0000305" key="2"/>
<proteinExistence type="inferred from homology"/>
<name>CARY_HALH5</name>
<reference key="1">
    <citation type="journal article" date="2000" name="Nucleic Acids Res.">
        <title>Complete genome sequence of the alkaliphilic bacterium Bacillus halodurans and genomic sequence comparison with Bacillus subtilis.</title>
        <authorList>
            <person name="Takami H."/>
            <person name="Nakasone K."/>
            <person name="Takaki Y."/>
            <person name="Maeno G."/>
            <person name="Sasaki R."/>
            <person name="Masui N."/>
            <person name="Fuji F."/>
            <person name="Hirama C."/>
            <person name="Nakamura Y."/>
            <person name="Ogasawara N."/>
            <person name="Kuhara S."/>
            <person name="Horikoshi K."/>
        </authorList>
    </citation>
    <scope>NUCLEOTIDE SEQUENCE [LARGE SCALE GENOMIC DNA]</scope>
    <source>
        <strain>ATCC BAA-125 / DSM 18197 / FERM 7344 / JCM 9153 / C-125</strain>
    </source>
</reference>
<keyword id="KW-0028">Amino-acid biosynthesis</keyword>
<keyword id="KW-0055">Arginine biosynthesis</keyword>
<keyword id="KW-0067">ATP-binding</keyword>
<keyword id="KW-0436">Ligase</keyword>
<keyword id="KW-0460">Magnesium</keyword>
<keyword id="KW-0464">Manganese</keyword>
<keyword id="KW-0479">Metal-binding</keyword>
<keyword id="KW-0547">Nucleotide-binding</keyword>
<keyword id="KW-0665">Pyrimidine biosynthesis</keyword>
<keyword id="KW-1185">Reference proteome</keyword>
<keyword id="KW-0677">Repeat</keyword>
<protein>
    <recommendedName>
        <fullName evidence="2">Carbamoyl phosphate synthase arginine-specific large chain</fullName>
        <ecNumber evidence="1">6.3.4.16</ecNumber>
        <ecNumber evidence="1">6.3.5.5</ecNumber>
    </recommendedName>
    <alternativeName>
        <fullName evidence="1">Carbamoyl phosphate synthetase ammonia chain</fullName>
    </alternativeName>
</protein>
<sequence length="1047" mass="115860">MPKRTDIQSVLVIGSGPIVIGQAAEFDYAGAQACLALREEGIQVILVNNNPATVMTDEACADVVYFEPLTVASVKNIIERERPDGLLATLGGQTGLNLAMKLEEAGILEAYNVELLGTPMESIKKGEDREAFRQLMHELHEPVPESEIVHSVAEAVDFANTVGYPIIVRPAYTLGGAGGGIAESEEALIRIVKGGLELSPIQQCLIEKSIAGFKEIEYEVMRDSNDTCITVCNMENIDPVGVHTGDSIVVAPSQTLTDQEYQMLRSASLKIIRTLGIVGGCNIQFALDPDSKQYYLIEVNPRVSRSSALASKATGYPIARMAAKLSLGYGLHELKNPVTEDTYASFEPSLDYVVVKFPRWPFDKLVHVNRELGTQMKATGEVMAIERNLEAGLQKAVRSLEIKTHGLSLPSLSQWEDSELWVIVKKADDRRFFAILELLRRGVTIEAIHEQTKIDRFFLTSFAKLMTLEKEIAGQSLDDITSDELSTYKKYGFSDEWLASSWGVGLADVRHTRKALGVVPSYKMVDTCAAEFEAKTPYYYSSWTGENDLLLPEKAKERVLIIGSGPIRIGQGIEFDYCSVHGAKSLRARNFEAIIINNNPETVSTDYETADRLYFEPLAVEDVLNVIEVENVDHVIVQLGGQTAIGLTKGLEEAGVSILGTTQDVIDQLEDRERFYEFMRSVEVPHIPGKTAETKEELLKAAQSIGYPILLRPSYVIGGQGMFIASNQEELAAFCEDKNHSVTFPILVDAYYPGVEFEVDVLTDGSDIFIPGMFEHVEKAGVHSGDSMAVTPPPTLEAKWKQQAINYTRQIAKGMAYKGLFNIQFVLYDEELYVIEVNPRASRTVPIFSKATSLPLITYTIDVLFGKTIAELGLSAGYRKESPYYTVKAPVFSYQKLAGLDPLLEAEMKSTGELIAISKDLPSAFRKAFAWGEEQTPALFRKKGSVFCQVDRAYDTEWQPLLRQLKEKGYSVVTEEAMSFSEWLASEDAICLVSVPAPGQKTGKQNREEALKQRVTVVSDLATFEKMIECLEVKDGEPFLLPDVVMN</sequence>
<feature type="chain" id="PRO_0000144988" description="Carbamoyl phosphate synthase arginine-specific large chain">
    <location>
        <begin position="1"/>
        <end position="1047"/>
    </location>
</feature>
<feature type="domain" description="ATP-grasp 1" evidence="1">
    <location>
        <begin position="133"/>
        <end position="327"/>
    </location>
</feature>
<feature type="domain" description="ATP-grasp 2" evidence="1">
    <location>
        <begin position="676"/>
        <end position="865"/>
    </location>
</feature>
<feature type="domain" description="MGS-like" evidence="1">
    <location>
        <begin position="937"/>
        <end position="1047"/>
    </location>
</feature>
<feature type="region of interest" description="Carboxyphosphate synthetic domain" evidence="1">
    <location>
        <begin position="1"/>
        <end position="401"/>
    </location>
</feature>
<feature type="region of interest" description="Oligomerization domain" evidence="1">
    <location>
        <begin position="402"/>
        <end position="549"/>
    </location>
</feature>
<feature type="region of interest" description="Carbamoyl phosphate synthetic domain" evidence="1">
    <location>
        <begin position="550"/>
        <end position="933"/>
    </location>
</feature>
<feature type="region of interest" description="Allosteric domain" evidence="1">
    <location>
        <begin position="934"/>
        <end position="1047"/>
    </location>
</feature>
<feature type="binding site" evidence="1">
    <location>
        <position position="129"/>
    </location>
    <ligand>
        <name>ATP</name>
        <dbReference type="ChEBI" id="CHEBI:30616"/>
        <label>1</label>
    </ligand>
</feature>
<feature type="binding site" evidence="1">
    <location>
        <position position="169"/>
    </location>
    <ligand>
        <name>ATP</name>
        <dbReference type="ChEBI" id="CHEBI:30616"/>
        <label>1</label>
    </ligand>
</feature>
<feature type="binding site" evidence="1">
    <location>
        <position position="175"/>
    </location>
    <ligand>
        <name>ATP</name>
        <dbReference type="ChEBI" id="CHEBI:30616"/>
        <label>1</label>
    </ligand>
</feature>
<feature type="binding site" evidence="1">
    <location>
        <position position="176"/>
    </location>
    <ligand>
        <name>ATP</name>
        <dbReference type="ChEBI" id="CHEBI:30616"/>
        <label>1</label>
    </ligand>
</feature>
<feature type="binding site" evidence="1">
    <location>
        <position position="208"/>
    </location>
    <ligand>
        <name>ATP</name>
        <dbReference type="ChEBI" id="CHEBI:30616"/>
        <label>1</label>
    </ligand>
</feature>
<feature type="binding site" evidence="1">
    <location>
        <position position="210"/>
    </location>
    <ligand>
        <name>ATP</name>
        <dbReference type="ChEBI" id="CHEBI:30616"/>
        <label>1</label>
    </ligand>
</feature>
<feature type="binding site" evidence="1">
    <location>
        <position position="215"/>
    </location>
    <ligand>
        <name>ATP</name>
        <dbReference type="ChEBI" id="CHEBI:30616"/>
        <label>1</label>
    </ligand>
</feature>
<feature type="binding site" evidence="1">
    <location>
        <position position="241"/>
    </location>
    <ligand>
        <name>ATP</name>
        <dbReference type="ChEBI" id="CHEBI:30616"/>
        <label>1</label>
    </ligand>
</feature>
<feature type="binding site" evidence="1">
    <location>
        <position position="242"/>
    </location>
    <ligand>
        <name>ATP</name>
        <dbReference type="ChEBI" id="CHEBI:30616"/>
        <label>1</label>
    </ligand>
</feature>
<feature type="binding site" evidence="1">
    <location>
        <position position="243"/>
    </location>
    <ligand>
        <name>ATP</name>
        <dbReference type="ChEBI" id="CHEBI:30616"/>
        <label>1</label>
    </ligand>
</feature>
<feature type="binding site" evidence="1">
    <location>
        <position position="284"/>
    </location>
    <ligand>
        <name>ATP</name>
        <dbReference type="ChEBI" id="CHEBI:30616"/>
        <label>1</label>
    </ligand>
</feature>
<feature type="binding site" evidence="1">
    <location>
        <position position="284"/>
    </location>
    <ligand>
        <name>Mg(2+)</name>
        <dbReference type="ChEBI" id="CHEBI:18420"/>
        <label>1</label>
    </ligand>
</feature>
<feature type="binding site" evidence="1">
    <location>
        <position position="284"/>
    </location>
    <ligand>
        <name>Mn(2+)</name>
        <dbReference type="ChEBI" id="CHEBI:29035"/>
        <label>1</label>
    </ligand>
</feature>
<feature type="binding site" evidence="1">
    <location>
        <position position="298"/>
    </location>
    <ligand>
        <name>ATP</name>
        <dbReference type="ChEBI" id="CHEBI:30616"/>
        <label>1</label>
    </ligand>
</feature>
<feature type="binding site" evidence="1">
    <location>
        <position position="298"/>
    </location>
    <ligand>
        <name>Mg(2+)</name>
        <dbReference type="ChEBI" id="CHEBI:18420"/>
        <label>1</label>
    </ligand>
</feature>
<feature type="binding site" evidence="1">
    <location>
        <position position="298"/>
    </location>
    <ligand>
        <name>Mg(2+)</name>
        <dbReference type="ChEBI" id="CHEBI:18420"/>
        <label>2</label>
    </ligand>
</feature>
<feature type="binding site" evidence="1">
    <location>
        <position position="298"/>
    </location>
    <ligand>
        <name>Mn(2+)</name>
        <dbReference type="ChEBI" id="CHEBI:29035"/>
        <label>1</label>
    </ligand>
</feature>
<feature type="binding site" evidence="1">
    <location>
        <position position="298"/>
    </location>
    <ligand>
        <name>Mn(2+)</name>
        <dbReference type="ChEBI" id="CHEBI:29035"/>
        <label>2</label>
    </ligand>
</feature>
<feature type="binding site" evidence="1">
    <location>
        <position position="300"/>
    </location>
    <ligand>
        <name>Mg(2+)</name>
        <dbReference type="ChEBI" id="CHEBI:18420"/>
        <label>2</label>
    </ligand>
</feature>
<feature type="binding site" evidence="1">
    <location>
        <position position="300"/>
    </location>
    <ligand>
        <name>Mn(2+)</name>
        <dbReference type="ChEBI" id="CHEBI:29035"/>
        <label>2</label>
    </ligand>
</feature>
<feature type="binding site" evidence="1">
    <location>
        <position position="712"/>
    </location>
    <ligand>
        <name>ATP</name>
        <dbReference type="ChEBI" id="CHEBI:30616"/>
        <label>2</label>
    </ligand>
</feature>
<feature type="binding site" evidence="1">
    <location>
        <position position="750"/>
    </location>
    <ligand>
        <name>ATP</name>
        <dbReference type="ChEBI" id="CHEBI:30616"/>
        <label>2</label>
    </ligand>
</feature>
<feature type="binding site" evidence="1">
    <location>
        <position position="756"/>
    </location>
    <ligand>
        <name>ATP</name>
        <dbReference type="ChEBI" id="CHEBI:30616"/>
        <label>2</label>
    </ligand>
</feature>
<feature type="binding site" evidence="1">
    <location>
        <position position="781"/>
    </location>
    <ligand>
        <name>ATP</name>
        <dbReference type="ChEBI" id="CHEBI:30616"/>
        <label>2</label>
    </ligand>
</feature>
<feature type="binding site" evidence="1">
    <location>
        <position position="782"/>
    </location>
    <ligand>
        <name>ATP</name>
        <dbReference type="ChEBI" id="CHEBI:30616"/>
        <label>2</label>
    </ligand>
</feature>
<feature type="binding site" evidence="1">
    <location>
        <position position="783"/>
    </location>
    <ligand>
        <name>ATP</name>
        <dbReference type="ChEBI" id="CHEBI:30616"/>
        <label>2</label>
    </ligand>
</feature>
<feature type="binding site" evidence="1">
    <location>
        <position position="784"/>
    </location>
    <ligand>
        <name>ATP</name>
        <dbReference type="ChEBI" id="CHEBI:30616"/>
        <label>2</label>
    </ligand>
</feature>
<feature type="binding site" evidence="1">
    <location>
        <position position="824"/>
    </location>
    <ligand>
        <name>ATP</name>
        <dbReference type="ChEBI" id="CHEBI:30616"/>
        <label>2</label>
    </ligand>
</feature>
<feature type="binding site" evidence="1">
    <location>
        <position position="824"/>
    </location>
    <ligand>
        <name>Mg(2+)</name>
        <dbReference type="ChEBI" id="CHEBI:18420"/>
        <label>3</label>
    </ligand>
</feature>
<feature type="binding site" evidence="1">
    <location>
        <position position="824"/>
    </location>
    <ligand>
        <name>Mn(2+)</name>
        <dbReference type="ChEBI" id="CHEBI:29035"/>
        <label>3</label>
    </ligand>
</feature>
<feature type="binding site" evidence="1">
    <location>
        <position position="836"/>
    </location>
    <ligand>
        <name>ATP</name>
        <dbReference type="ChEBI" id="CHEBI:30616"/>
        <label>2</label>
    </ligand>
</feature>
<feature type="binding site" evidence="1">
    <location>
        <position position="836"/>
    </location>
    <ligand>
        <name>Mg(2+)</name>
        <dbReference type="ChEBI" id="CHEBI:18420"/>
        <label>3</label>
    </ligand>
</feature>
<feature type="binding site" evidence="1">
    <location>
        <position position="836"/>
    </location>
    <ligand>
        <name>Mg(2+)</name>
        <dbReference type="ChEBI" id="CHEBI:18420"/>
        <label>4</label>
    </ligand>
</feature>
<feature type="binding site" evidence="1">
    <location>
        <position position="836"/>
    </location>
    <ligand>
        <name>Mn(2+)</name>
        <dbReference type="ChEBI" id="CHEBI:29035"/>
        <label>3</label>
    </ligand>
</feature>
<feature type="binding site" evidence="1">
    <location>
        <position position="836"/>
    </location>
    <ligand>
        <name>Mn(2+)</name>
        <dbReference type="ChEBI" id="CHEBI:29035"/>
        <label>4</label>
    </ligand>
</feature>
<feature type="binding site" evidence="1">
    <location>
        <position position="838"/>
    </location>
    <ligand>
        <name>Mg(2+)</name>
        <dbReference type="ChEBI" id="CHEBI:18420"/>
        <label>4</label>
    </ligand>
</feature>
<feature type="binding site" evidence="1">
    <location>
        <position position="838"/>
    </location>
    <ligand>
        <name>Mn(2+)</name>
        <dbReference type="ChEBI" id="CHEBI:29035"/>
        <label>4</label>
    </ligand>
</feature>
<gene>
    <name evidence="1" type="primary">carB</name>
    <name type="ordered locus">BH2895</name>
</gene>